<protein>
    <recommendedName>
        <fullName>Uncharacterized protein C45G9.12</fullName>
    </recommendedName>
</protein>
<dbReference type="EMBL" id="FO080873">
    <property type="protein sequence ID" value="CCD67401.1"/>
    <property type="molecule type" value="Genomic_DNA"/>
</dbReference>
<dbReference type="PIR" id="B88449">
    <property type="entry name" value="B88449"/>
</dbReference>
<dbReference type="RefSeq" id="NP_498079.1">
    <property type="nucleotide sequence ID" value="NM_065678.2"/>
</dbReference>
<dbReference type="FunCoup" id="Q09283">
    <property type="interactions" value="829"/>
</dbReference>
<dbReference type="PaxDb" id="6239-C45G9.12"/>
<dbReference type="EnsemblMetazoa" id="C45G9.12.1">
    <property type="protein sequence ID" value="C45G9.12.1"/>
    <property type="gene ID" value="WBGene00016683"/>
</dbReference>
<dbReference type="GeneID" id="183482"/>
<dbReference type="KEGG" id="cel:CELE_C45G9.12"/>
<dbReference type="UCSC" id="C45G9.12">
    <property type="organism name" value="c. elegans"/>
</dbReference>
<dbReference type="AGR" id="WB:WBGene00016683"/>
<dbReference type="CTD" id="183482"/>
<dbReference type="WormBase" id="C45G9.12">
    <property type="protein sequence ID" value="CE01853"/>
    <property type="gene ID" value="WBGene00016683"/>
</dbReference>
<dbReference type="HOGENOM" id="CLU_2388150_0_0_1"/>
<dbReference type="InParanoid" id="Q09283"/>
<dbReference type="OMA" id="FRPMTRN"/>
<dbReference type="OrthoDB" id="5841630at2759"/>
<dbReference type="PRO" id="PR:Q09283"/>
<dbReference type="Proteomes" id="UP000001940">
    <property type="component" value="Chromosome III"/>
</dbReference>
<dbReference type="Bgee" id="WBGene00016683">
    <property type="expression patterns" value="Expressed in larva and 2 other cell types or tissues"/>
</dbReference>
<gene>
    <name type="ORF">C45G9.12</name>
</gene>
<feature type="chain" id="PRO_0000065244" description="Uncharacterized protein C45G9.12">
    <location>
        <begin position="1"/>
        <end position="93"/>
    </location>
</feature>
<feature type="region of interest" description="Disordered" evidence="1">
    <location>
        <begin position="26"/>
        <end position="73"/>
    </location>
</feature>
<name>YQIC_CAEEL</name>
<accession>Q09283</accession>
<keyword id="KW-1185">Reference proteome</keyword>
<sequence length="93" mass="10107">MNAFSIILLLLSVLLINAQFQPRTSNRGTIFRPMTRNSGIVGRRGGPVAPAPFRNNVQKPGTRPPGFKPPSGVAKKLNSAVDFRALARVLLKQ</sequence>
<organism>
    <name type="scientific">Caenorhabditis elegans</name>
    <dbReference type="NCBI Taxonomy" id="6239"/>
    <lineage>
        <taxon>Eukaryota</taxon>
        <taxon>Metazoa</taxon>
        <taxon>Ecdysozoa</taxon>
        <taxon>Nematoda</taxon>
        <taxon>Chromadorea</taxon>
        <taxon>Rhabditida</taxon>
        <taxon>Rhabditina</taxon>
        <taxon>Rhabditomorpha</taxon>
        <taxon>Rhabditoidea</taxon>
        <taxon>Rhabditidae</taxon>
        <taxon>Peloderinae</taxon>
        <taxon>Caenorhabditis</taxon>
    </lineage>
</organism>
<proteinExistence type="predicted"/>
<reference key="1">
    <citation type="journal article" date="1998" name="Science">
        <title>Genome sequence of the nematode C. elegans: a platform for investigating biology.</title>
        <authorList>
            <consortium name="The C. elegans sequencing consortium"/>
        </authorList>
    </citation>
    <scope>NUCLEOTIDE SEQUENCE [LARGE SCALE GENOMIC DNA]</scope>
    <source>
        <strain>Bristol N2</strain>
    </source>
</reference>
<evidence type="ECO:0000256" key="1">
    <source>
        <dbReference type="SAM" id="MobiDB-lite"/>
    </source>
</evidence>